<sequence>MTNIRKSHPLLKIINKSFIDLPAPSNITSWWNFGSLLGICLMLQILTGLFLAMHYSSDTATAFNSVTHTCRDVNYGWVLRYLHANGASMFFICLYLHVGRGIYYGSYMYTETWNIGIILLFTVMATAFMGYVLPWGQMSFWGATVITNLLSAVPYIGTNLVEWIWGGFSVDKATLTRLFAFHFLLPFIISAMVMVHLLFLHETGSNNPMGIPSNMDMIPFHPYYTIKDILGLLLMIMVLLMLVLFSPDMLGDPDNYMPANPLSTPPHIKPEWYFLFAYAILRSIPNKLGGVVALVLSILILXXXPLLHTSKQRSMAFRPLSQCLFWLLVADLLTLTWIGGQPVEHPYIIIGQLASILYFSIIIVLMPITSIVENHMLKW</sequence>
<reference key="1">
    <citation type="journal article" date="2001" name="Mol. Phylogenet. Evol.">
        <title>Molecular systematics of bats of the genus Myotis (Vespertilionidae) suggests deterministic ecomorphological convergences.</title>
        <authorList>
            <person name="Ruedi M."/>
            <person name="Mayer F."/>
        </authorList>
    </citation>
    <scope>NUCLEOTIDE SEQUENCE [GENOMIC DNA]</scope>
    <source>
        <strain>Isolate FMNH 144313</strain>
    </source>
</reference>
<accession>Q956Y9</accession>
<organism>
    <name type="scientific">Myotis welwitschii</name>
    <name type="common">Welwitsch's bat</name>
    <dbReference type="NCBI Taxonomy" id="160974"/>
    <lineage>
        <taxon>Eukaryota</taxon>
        <taxon>Metazoa</taxon>
        <taxon>Chordata</taxon>
        <taxon>Craniata</taxon>
        <taxon>Vertebrata</taxon>
        <taxon>Euteleostomi</taxon>
        <taxon>Mammalia</taxon>
        <taxon>Eutheria</taxon>
        <taxon>Laurasiatheria</taxon>
        <taxon>Chiroptera</taxon>
        <taxon>Yangochiroptera</taxon>
        <taxon>Vespertilionidae</taxon>
        <taxon>Myotis</taxon>
    </lineage>
</organism>
<dbReference type="EMBL" id="AF376873">
    <property type="protein sequence ID" value="AAK57692.1"/>
    <property type="molecule type" value="Genomic_DNA"/>
</dbReference>
<dbReference type="GO" id="GO:0005743">
    <property type="term" value="C:mitochondrial inner membrane"/>
    <property type="evidence" value="ECO:0007669"/>
    <property type="project" value="UniProtKB-SubCell"/>
</dbReference>
<dbReference type="GO" id="GO:0045275">
    <property type="term" value="C:respiratory chain complex III"/>
    <property type="evidence" value="ECO:0007669"/>
    <property type="project" value="InterPro"/>
</dbReference>
<dbReference type="GO" id="GO:0046872">
    <property type="term" value="F:metal ion binding"/>
    <property type="evidence" value="ECO:0007669"/>
    <property type="project" value="UniProtKB-KW"/>
</dbReference>
<dbReference type="GO" id="GO:0008121">
    <property type="term" value="F:ubiquinol-cytochrome-c reductase activity"/>
    <property type="evidence" value="ECO:0007669"/>
    <property type="project" value="InterPro"/>
</dbReference>
<dbReference type="GO" id="GO:0006122">
    <property type="term" value="P:mitochondrial electron transport, ubiquinol to cytochrome c"/>
    <property type="evidence" value="ECO:0007669"/>
    <property type="project" value="TreeGrafter"/>
</dbReference>
<dbReference type="CDD" id="cd00290">
    <property type="entry name" value="cytochrome_b_C"/>
    <property type="match status" value="1"/>
</dbReference>
<dbReference type="CDD" id="cd00284">
    <property type="entry name" value="Cytochrome_b_N"/>
    <property type="match status" value="1"/>
</dbReference>
<dbReference type="FunFam" id="1.20.810.10:FF:000002">
    <property type="entry name" value="Cytochrome b"/>
    <property type="match status" value="1"/>
</dbReference>
<dbReference type="Gene3D" id="1.20.810.10">
    <property type="entry name" value="Cytochrome Bc1 Complex, Chain C"/>
    <property type="match status" value="1"/>
</dbReference>
<dbReference type="InterPro" id="IPR005798">
    <property type="entry name" value="Cyt_b/b6_C"/>
</dbReference>
<dbReference type="InterPro" id="IPR036150">
    <property type="entry name" value="Cyt_b/b6_C_sf"/>
</dbReference>
<dbReference type="InterPro" id="IPR005797">
    <property type="entry name" value="Cyt_b/b6_N"/>
</dbReference>
<dbReference type="InterPro" id="IPR027387">
    <property type="entry name" value="Cytb/b6-like_sf"/>
</dbReference>
<dbReference type="InterPro" id="IPR030689">
    <property type="entry name" value="Cytochrome_b"/>
</dbReference>
<dbReference type="InterPro" id="IPR048260">
    <property type="entry name" value="Cytochrome_b_C_euk/bac"/>
</dbReference>
<dbReference type="InterPro" id="IPR048259">
    <property type="entry name" value="Cytochrome_b_N_euk/bac"/>
</dbReference>
<dbReference type="InterPro" id="IPR016174">
    <property type="entry name" value="Di-haem_cyt_TM"/>
</dbReference>
<dbReference type="PANTHER" id="PTHR19271">
    <property type="entry name" value="CYTOCHROME B"/>
    <property type="match status" value="1"/>
</dbReference>
<dbReference type="PANTHER" id="PTHR19271:SF16">
    <property type="entry name" value="CYTOCHROME B"/>
    <property type="match status" value="1"/>
</dbReference>
<dbReference type="Pfam" id="PF00032">
    <property type="entry name" value="Cytochrom_B_C"/>
    <property type="match status" value="1"/>
</dbReference>
<dbReference type="Pfam" id="PF00033">
    <property type="entry name" value="Cytochrome_B"/>
    <property type="match status" value="1"/>
</dbReference>
<dbReference type="PIRSF" id="PIRSF038885">
    <property type="entry name" value="COB"/>
    <property type="match status" value="1"/>
</dbReference>
<dbReference type="SUPFAM" id="SSF81648">
    <property type="entry name" value="a domain/subunit of cytochrome bc1 complex (Ubiquinol-cytochrome c reductase)"/>
    <property type="match status" value="1"/>
</dbReference>
<dbReference type="SUPFAM" id="SSF81342">
    <property type="entry name" value="Transmembrane di-heme cytochromes"/>
    <property type="match status" value="1"/>
</dbReference>
<dbReference type="PROSITE" id="PS51003">
    <property type="entry name" value="CYTB_CTER"/>
    <property type="match status" value="1"/>
</dbReference>
<dbReference type="PROSITE" id="PS51002">
    <property type="entry name" value="CYTB_NTER"/>
    <property type="match status" value="1"/>
</dbReference>
<geneLocation type="mitochondrion"/>
<proteinExistence type="inferred from homology"/>
<comment type="function">
    <text evidence="2">Component of the ubiquinol-cytochrome c reductase complex (complex III or cytochrome b-c1 complex) that is part of the mitochondrial respiratory chain. The b-c1 complex mediates electron transfer from ubiquinol to cytochrome c. Contributes to the generation of a proton gradient across the mitochondrial membrane that is then used for ATP synthesis.</text>
</comment>
<comment type="cofactor">
    <cofactor evidence="2">
        <name>heme b</name>
        <dbReference type="ChEBI" id="CHEBI:60344"/>
    </cofactor>
    <text evidence="2">Binds 2 heme b groups non-covalently.</text>
</comment>
<comment type="subunit">
    <text evidence="2">The cytochrome bc1 complex contains 11 subunits: 3 respiratory subunits (MT-CYB, CYC1 and UQCRFS1), 2 core proteins (UQCRC1 and UQCRC2) and 6 low-molecular weight proteins (UQCRH/QCR6, UQCRB/QCR7, UQCRQ/QCR8, UQCR10/QCR9, UQCR11/QCR10 and a cleavage product of UQCRFS1). This cytochrome bc1 complex then forms a dimer.</text>
</comment>
<comment type="subcellular location">
    <subcellularLocation>
        <location evidence="2">Mitochondrion inner membrane</location>
        <topology evidence="2">Multi-pass membrane protein</topology>
    </subcellularLocation>
</comment>
<comment type="miscellaneous">
    <text evidence="1">Heme 1 (or BL or b562) is low-potential and absorbs at about 562 nm, and heme 2 (or BH or b566) is high-potential and absorbs at about 566 nm.</text>
</comment>
<comment type="similarity">
    <text evidence="3 4">Belongs to the cytochrome b family.</text>
</comment>
<comment type="caution">
    <text evidence="2">The full-length protein contains only eight transmembrane helices, not nine as predicted by bioinformatics tools.</text>
</comment>
<name>CYB_MYOWE</name>
<feature type="chain" id="PRO_0000061256" description="Cytochrome b">
    <location>
        <begin position="1"/>
        <end position="379"/>
    </location>
</feature>
<feature type="transmembrane region" description="Helical" evidence="2">
    <location>
        <begin position="33"/>
        <end position="53"/>
    </location>
</feature>
<feature type="transmembrane region" description="Helical" evidence="2">
    <location>
        <begin position="77"/>
        <end position="98"/>
    </location>
</feature>
<feature type="transmembrane region" description="Helical" evidence="2">
    <location>
        <begin position="113"/>
        <end position="133"/>
    </location>
</feature>
<feature type="transmembrane region" description="Helical" evidence="2">
    <location>
        <begin position="178"/>
        <end position="198"/>
    </location>
</feature>
<feature type="transmembrane region" description="Helical" evidence="2">
    <location>
        <begin position="226"/>
        <end position="246"/>
    </location>
</feature>
<feature type="transmembrane region" description="Helical" evidence="2">
    <location>
        <begin position="288"/>
        <end position="308"/>
    </location>
</feature>
<feature type="transmembrane region" description="Helical" evidence="2">
    <location>
        <begin position="320"/>
        <end position="340"/>
    </location>
</feature>
<feature type="transmembrane region" description="Helical" evidence="2">
    <location>
        <begin position="347"/>
        <end position="367"/>
    </location>
</feature>
<feature type="binding site" description="axial binding residue" evidence="2">
    <location>
        <position position="83"/>
    </location>
    <ligand>
        <name>heme b</name>
        <dbReference type="ChEBI" id="CHEBI:60344"/>
        <label>b562</label>
    </ligand>
    <ligandPart>
        <name>Fe</name>
        <dbReference type="ChEBI" id="CHEBI:18248"/>
    </ligandPart>
</feature>
<feature type="binding site" description="axial binding residue" evidence="2">
    <location>
        <position position="97"/>
    </location>
    <ligand>
        <name>heme b</name>
        <dbReference type="ChEBI" id="CHEBI:60344"/>
        <label>b566</label>
    </ligand>
    <ligandPart>
        <name>Fe</name>
        <dbReference type="ChEBI" id="CHEBI:18248"/>
    </ligandPart>
</feature>
<feature type="binding site" description="axial binding residue" evidence="2">
    <location>
        <position position="182"/>
    </location>
    <ligand>
        <name>heme b</name>
        <dbReference type="ChEBI" id="CHEBI:60344"/>
        <label>b562</label>
    </ligand>
    <ligandPart>
        <name>Fe</name>
        <dbReference type="ChEBI" id="CHEBI:18248"/>
    </ligandPart>
</feature>
<feature type="binding site" description="axial binding residue" evidence="2">
    <location>
        <position position="196"/>
    </location>
    <ligand>
        <name>heme b</name>
        <dbReference type="ChEBI" id="CHEBI:60344"/>
        <label>b566</label>
    </ligand>
    <ligandPart>
        <name>Fe</name>
        <dbReference type="ChEBI" id="CHEBI:18248"/>
    </ligandPart>
</feature>
<feature type="binding site" evidence="2">
    <location>
        <position position="201"/>
    </location>
    <ligand>
        <name>a ubiquinone</name>
        <dbReference type="ChEBI" id="CHEBI:16389"/>
    </ligand>
</feature>
<keyword id="KW-0249">Electron transport</keyword>
<keyword id="KW-0349">Heme</keyword>
<keyword id="KW-0408">Iron</keyword>
<keyword id="KW-0472">Membrane</keyword>
<keyword id="KW-0479">Metal-binding</keyword>
<keyword id="KW-0496">Mitochondrion</keyword>
<keyword id="KW-0999">Mitochondrion inner membrane</keyword>
<keyword id="KW-0679">Respiratory chain</keyword>
<keyword id="KW-0812">Transmembrane</keyword>
<keyword id="KW-1133">Transmembrane helix</keyword>
<keyword id="KW-0813">Transport</keyword>
<keyword id="KW-0830">Ubiquinone</keyword>
<evidence type="ECO:0000250" key="1"/>
<evidence type="ECO:0000250" key="2">
    <source>
        <dbReference type="UniProtKB" id="P00157"/>
    </source>
</evidence>
<evidence type="ECO:0000255" key="3">
    <source>
        <dbReference type="PROSITE-ProRule" id="PRU00967"/>
    </source>
</evidence>
<evidence type="ECO:0000255" key="4">
    <source>
        <dbReference type="PROSITE-ProRule" id="PRU00968"/>
    </source>
</evidence>
<gene>
    <name type="primary">MT-CYB</name>
    <name type="synonym">COB</name>
    <name type="synonym">CYTB</name>
    <name type="synonym">MTCYB</name>
</gene>
<protein>
    <recommendedName>
        <fullName>Cytochrome b</fullName>
    </recommendedName>
    <alternativeName>
        <fullName>Complex III subunit 3</fullName>
    </alternativeName>
    <alternativeName>
        <fullName>Complex III subunit III</fullName>
    </alternativeName>
    <alternativeName>
        <fullName>Cytochrome b-c1 complex subunit 3</fullName>
    </alternativeName>
    <alternativeName>
        <fullName>Ubiquinol-cytochrome-c reductase complex cytochrome b subunit</fullName>
    </alternativeName>
</protein>